<reference key="1">
    <citation type="journal article" date="2009" name="J. Bacteriol.">
        <title>Complete genome sequence and comparative genome analysis of enteropathogenic Escherichia coli O127:H6 strain E2348/69.</title>
        <authorList>
            <person name="Iguchi A."/>
            <person name="Thomson N.R."/>
            <person name="Ogura Y."/>
            <person name="Saunders D."/>
            <person name="Ooka T."/>
            <person name="Henderson I.R."/>
            <person name="Harris D."/>
            <person name="Asadulghani M."/>
            <person name="Kurokawa K."/>
            <person name="Dean P."/>
            <person name="Kenny B."/>
            <person name="Quail M.A."/>
            <person name="Thurston S."/>
            <person name="Dougan G."/>
            <person name="Hayashi T."/>
            <person name="Parkhill J."/>
            <person name="Frankel G."/>
        </authorList>
    </citation>
    <scope>NUCLEOTIDE SEQUENCE [LARGE SCALE GENOMIC DNA]</scope>
    <source>
        <strain>E2348/69 / EPEC</strain>
    </source>
</reference>
<proteinExistence type="inferred from homology"/>
<gene>
    <name evidence="1" type="primary">dcd</name>
    <name type="ordered locus">E2348C_2207</name>
</gene>
<comment type="function">
    <text evidence="1">Catalyzes the deamination of dCTP to dUTP.</text>
</comment>
<comment type="catalytic activity">
    <reaction evidence="1">
        <text>dCTP + H2O + H(+) = dUTP + NH4(+)</text>
        <dbReference type="Rhea" id="RHEA:22680"/>
        <dbReference type="ChEBI" id="CHEBI:15377"/>
        <dbReference type="ChEBI" id="CHEBI:15378"/>
        <dbReference type="ChEBI" id="CHEBI:28938"/>
        <dbReference type="ChEBI" id="CHEBI:61481"/>
        <dbReference type="ChEBI" id="CHEBI:61555"/>
        <dbReference type="EC" id="3.5.4.13"/>
    </reaction>
</comment>
<comment type="pathway">
    <text evidence="1">Pyrimidine metabolism; dUMP biosynthesis; dUMP from dCTP (dUTP route): step 1/2.</text>
</comment>
<comment type="subunit">
    <text evidence="1">Homotrimer.</text>
</comment>
<comment type="similarity">
    <text evidence="1">Belongs to the dCTP deaminase family.</text>
</comment>
<dbReference type="EC" id="3.5.4.13" evidence="1"/>
<dbReference type="EMBL" id="FM180568">
    <property type="protein sequence ID" value="CAS09755.1"/>
    <property type="molecule type" value="Genomic_DNA"/>
</dbReference>
<dbReference type="RefSeq" id="WP_001234767.1">
    <property type="nucleotide sequence ID" value="NC_011601.1"/>
</dbReference>
<dbReference type="SMR" id="B7UTA3"/>
<dbReference type="GeneID" id="93775126"/>
<dbReference type="KEGG" id="ecg:E2348C_2207"/>
<dbReference type="HOGENOM" id="CLU_087476_2_0_6"/>
<dbReference type="UniPathway" id="UPA00610">
    <property type="reaction ID" value="UER00665"/>
</dbReference>
<dbReference type="Proteomes" id="UP000008205">
    <property type="component" value="Chromosome"/>
</dbReference>
<dbReference type="GO" id="GO:0008829">
    <property type="term" value="F:dCTP deaminase activity"/>
    <property type="evidence" value="ECO:0007669"/>
    <property type="project" value="UniProtKB-UniRule"/>
</dbReference>
<dbReference type="GO" id="GO:0000166">
    <property type="term" value="F:nucleotide binding"/>
    <property type="evidence" value="ECO:0007669"/>
    <property type="project" value="UniProtKB-KW"/>
</dbReference>
<dbReference type="GO" id="GO:0006226">
    <property type="term" value="P:dUMP biosynthetic process"/>
    <property type="evidence" value="ECO:0007669"/>
    <property type="project" value="UniProtKB-UniPathway"/>
</dbReference>
<dbReference type="GO" id="GO:0006229">
    <property type="term" value="P:dUTP biosynthetic process"/>
    <property type="evidence" value="ECO:0007669"/>
    <property type="project" value="UniProtKB-UniRule"/>
</dbReference>
<dbReference type="GO" id="GO:0015949">
    <property type="term" value="P:nucleobase-containing small molecule interconversion"/>
    <property type="evidence" value="ECO:0007669"/>
    <property type="project" value="TreeGrafter"/>
</dbReference>
<dbReference type="CDD" id="cd07557">
    <property type="entry name" value="trimeric_dUTPase"/>
    <property type="match status" value="1"/>
</dbReference>
<dbReference type="FunFam" id="2.70.40.10:FF:000003">
    <property type="entry name" value="dCTP deaminase"/>
    <property type="match status" value="1"/>
</dbReference>
<dbReference type="Gene3D" id="2.70.40.10">
    <property type="match status" value="1"/>
</dbReference>
<dbReference type="HAMAP" id="MF_00146">
    <property type="entry name" value="dCTP_deaminase"/>
    <property type="match status" value="1"/>
</dbReference>
<dbReference type="InterPro" id="IPR011962">
    <property type="entry name" value="dCTP_deaminase"/>
</dbReference>
<dbReference type="InterPro" id="IPR036157">
    <property type="entry name" value="dUTPase-like_sf"/>
</dbReference>
<dbReference type="InterPro" id="IPR033704">
    <property type="entry name" value="dUTPase_trimeric"/>
</dbReference>
<dbReference type="NCBIfam" id="TIGR02274">
    <property type="entry name" value="dCTP_deam"/>
    <property type="match status" value="1"/>
</dbReference>
<dbReference type="PANTHER" id="PTHR42680">
    <property type="entry name" value="DCTP DEAMINASE"/>
    <property type="match status" value="1"/>
</dbReference>
<dbReference type="PANTHER" id="PTHR42680:SF3">
    <property type="entry name" value="DCTP DEAMINASE"/>
    <property type="match status" value="1"/>
</dbReference>
<dbReference type="Pfam" id="PF22769">
    <property type="entry name" value="DCD"/>
    <property type="match status" value="1"/>
</dbReference>
<dbReference type="SUPFAM" id="SSF51283">
    <property type="entry name" value="dUTPase-like"/>
    <property type="match status" value="1"/>
</dbReference>
<feature type="chain" id="PRO_1000123144" description="dCTP deaminase">
    <location>
        <begin position="1"/>
        <end position="193"/>
    </location>
</feature>
<feature type="region of interest" description="Disordered" evidence="2">
    <location>
        <begin position="169"/>
        <end position="193"/>
    </location>
</feature>
<feature type="active site" description="Proton donor/acceptor" evidence="1">
    <location>
        <position position="138"/>
    </location>
</feature>
<feature type="binding site" evidence="1">
    <location>
        <begin position="110"/>
        <end position="115"/>
    </location>
    <ligand>
        <name>dCTP</name>
        <dbReference type="ChEBI" id="CHEBI:61481"/>
    </ligand>
</feature>
<feature type="binding site" evidence="1">
    <location>
        <position position="128"/>
    </location>
    <ligand>
        <name>dCTP</name>
        <dbReference type="ChEBI" id="CHEBI:61481"/>
    </ligand>
</feature>
<feature type="binding site" evidence="1">
    <location>
        <begin position="136"/>
        <end position="138"/>
    </location>
    <ligand>
        <name>dCTP</name>
        <dbReference type="ChEBI" id="CHEBI:61481"/>
    </ligand>
</feature>
<feature type="binding site" evidence="1">
    <location>
        <position position="171"/>
    </location>
    <ligand>
        <name>dCTP</name>
        <dbReference type="ChEBI" id="CHEBI:61481"/>
    </ligand>
</feature>
<feature type="binding site" evidence="1">
    <location>
        <position position="178"/>
    </location>
    <ligand>
        <name>dCTP</name>
        <dbReference type="ChEBI" id="CHEBI:61481"/>
    </ligand>
</feature>
<feature type="binding site" evidence="1">
    <location>
        <position position="182"/>
    </location>
    <ligand>
        <name>dCTP</name>
        <dbReference type="ChEBI" id="CHEBI:61481"/>
    </ligand>
</feature>
<sequence length="193" mass="21221">MRLCDRDIEAWLDEGRLSINPRPPVERINGATVDVRLGNKFRTFRGHTAAFIDLSGPKDEVSAALDRVMSDEIVLDEGEAFYLHPGELALAVTLESVTLPADLVGWLDGRSSLARLGLMVHVTAHRIDPGWSGCIVLEFYNSGKLPLALRPGMLIGALSFEPLSGPAARPYNRREDAKYRNQQGAVASRIDKD</sequence>
<name>DCD_ECO27</name>
<evidence type="ECO:0000255" key="1">
    <source>
        <dbReference type="HAMAP-Rule" id="MF_00146"/>
    </source>
</evidence>
<evidence type="ECO:0000256" key="2">
    <source>
        <dbReference type="SAM" id="MobiDB-lite"/>
    </source>
</evidence>
<accession>B7UTA3</accession>
<organism>
    <name type="scientific">Escherichia coli O127:H6 (strain E2348/69 / EPEC)</name>
    <dbReference type="NCBI Taxonomy" id="574521"/>
    <lineage>
        <taxon>Bacteria</taxon>
        <taxon>Pseudomonadati</taxon>
        <taxon>Pseudomonadota</taxon>
        <taxon>Gammaproteobacteria</taxon>
        <taxon>Enterobacterales</taxon>
        <taxon>Enterobacteriaceae</taxon>
        <taxon>Escherichia</taxon>
    </lineage>
</organism>
<keyword id="KW-0378">Hydrolase</keyword>
<keyword id="KW-0546">Nucleotide metabolism</keyword>
<keyword id="KW-0547">Nucleotide-binding</keyword>
<keyword id="KW-1185">Reference proteome</keyword>
<protein>
    <recommendedName>
        <fullName evidence="1">dCTP deaminase</fullName>
        <ecNumber evidence="1">3.5.4.13</ecNumber>
    </recommendedName>
    <alternativeName>
        <fullName evidence="1">Deoxycytidine triphosphate deaminase</fullName>
    </alternativeName>
</protein>